<gene>
    <name evidence="1" type="primary">folD</name>
    <name type="ordered locus">MRA_3396</name>
</gene>
<proteinExistence type="inferred from homology"/>
<feature type="chain" id="PRO_0000305847" description="Bifunctional protein FolD">
    <location>
        <begin position="1"/>
        <end position="281"/>
    </location>
</feature>
<feature type="binding site" evidence="1">
    <location>
        <begin position="165"/>
        <end position="167"/>
    </location>
    <ligand>
        <name>NADP(+)</name>
        <dbReference type="ChEBI" id="CHEBI:58349"/>
    </ligand>
</feature>
<feature type="binding site" evidence="1">
    <location>
        <position position="192"/>
    </location>
    <ligand>
        <name>NADP(+)</name>
        <dbReference type="ChEBI" id="CHEBI:58349"/>
    </ligand>
</feature>
<feature type="binding site" evidence="1">
    <location>
        <position position="233"/>
    </location>
    <ligand>
        <name>NADP(+)</name>
        <dbReference type="ChEBI" id="CHEBI:58349"/>
    </ligand>
</feature>
<comment type="function">
    <text evidence="1">Catalyzes the oxidation of 5,10-methylenetetrahydrofolate to 5,10-methenyltetrahydrofolate and then the hydrolysis of 5,10-methenyltetrahydrofolate to 10-formyltetrahydrofolate.</text>
</comment>
<comment type="catalytic activity">
    <reaction evidence="1">
        <text>(6R)-5,10-methylene-5,6,7,8-tetrahydrofolate + NADP(+) = (6R)-5,10-methenyltetrahydrofolate + NADPH</text>
        <dbReference type="Rhea" id="RHEA:22812"/>
        <dbReference type="ChEBI" id="CHEBI:15636"/>
        <dbReference type="ChEBI" id="CHEBI:57455"/>
        <dbReference type="ChEBI" id="CHEBI:57783"/>
        <dbReference type="ChEBI" id="CHEBI:58349"/>
        <dbReference type="EC" id="1.5.1.5"/>
    </reaction>
</comment>
<comment type="catalytic activity">
    <reaction evidence="1">
        <text>(6R)-5,10-methenyltetrahydrofolate + H2O = (6R)-10-formyltetrahydrofolate + H(+)</text>
        <dbReference type="Rhea" id="RHEA:23700"/>
        <dbReference type="ChEBI" id="CHEBI:15377"/>
        <dbReference type="ChEBI" id="CHEBI:15378"/>
        <dbReference type="ChEBI" id="CHEBI:57455"/>
        <dbReference type="ChEBI" id="CHEBI:195366"/>
        <dbReference type="EC" id="3.5.4.9"/>
    </reaction>
</comment>
<comment type="pathway">
    <text evidence="1">One-carbon metabolism; tetrahydrofolate interconversion.</text>
</comment>
<comment type="subunit">
    <text evidence="1">Homodimer.</text>
</comment>
<comment type="similarity">
    <text evidence="1">Belongs to the tetrahydrofolate dehydrogenase/cyclohydrolase family.</text>
</comment>
<accession>A5U830</accession>
<sequence length="281" mass="29484">MGAIMLDGKATRDEIFGDLKQRVAALDAAGRTPGLGTILVGDDPGSQAYVRGKHADCAKVGITSIRRDLPADISTATLNETIDELNANPDCTGYIVQLPLPKHLDENAALERVDPAKDADGLHPTNLGRLVLGTPAPLPCTPRGIVHLLRRYDISIAGAHVVVIGRGVTVGRPLGLLLTRRSENATVTLCHTGTRDLPALTRQADIVVAAVGVAHLLTADMVRPGAAVIDVGVSRTDDGLVGDVHPDVWELAGHVSPNPGGVGPLTRAFLLTNVVELAERR</sequence>
<dbReference type="EC" id="1.5.1.5" evidence="1"/>
<dbReference type="EC" id="3.5.4.9" evidence="1"/>
<dbReference type="EMBL" id="CP000611">
    <property type="protein sequence ID" value="ABQ75180.1"/>
    <property type="molecule type" value="Genomic_DNA"/>
</dbReference>
<dbReference type="RefSeq" id="WP_003417751.1">
    <property type="nucleotide sequence ID" value="NZ_CP016972.1"/>
</dbReference>
<dbReference type="SMR" id="A5U830"/>
<dbReference type="KEGG" id="mra:MRA_3396"/>
<dbReference type="eggNOG" id="COG0190">
    <property type="taxonomic scope" value="Bacteria"/>
</dbReference>
<dbReference type="HOGENOM" id="CLU_034045_3_0_11"/>
<dbReference type="UniPathway" id="UPA00193"/>
<dbReference type="Proteomes" id="UP000001988">
    <property type="component" value="Chromosome"/>
</dbReference>
<dbReference type="GO" id="GO:0005829">
    <property type="term" value="C:cytosol"/>
    <property type="evidence" value="ECO:0007669"/>
    <property type="project" value="TreeGrafter"/>
</dbReference>
<dbReference type="GO" id="GO:0004477">
    <property type="term" value="F:methenyltetrahydrofolate cyclohydrolase activity"/>
    <property type="evidence" value="ECO:0007669"/>
    <property type="project" value="UniProtKB-UniRule"/>
</dbReference>
<dbReference type="GO" id="GO:0004488">
    <property type="term" value="F:methylenetetrahydrofolate dehydrogenase (NADP+) activity"/>
    <property type="evidence" value="ECO:0007669"/>
    <property type="project" value="UniProtKB-UniRule"/>
</dbReference>
<dbReference type="GO" id="GO:0000105">
    <property type="term" value="P:L-histidine biosynthetic process"/>
    <property type="evidence" value="ECO:0007669"/>
    <property type="project" value="UniProtKB-KW"/>
</dbReference>
<dbReference type="GO" id="GO:0009086">
    <property type="term" value="P:methionine biosynthetic process"/>
    <property type="evidence" value="ECO:0007669"/>
    <property type="project" value="UniProtKB-KW"/>
</dbReference>
<dbReference type="GO" id="GO:0006164">
    <property type="term" value="P:purine nucleotide biosynthetic process"/>
    <property type="evidence" value="ECO:0007669"/>
    <property type="project" value="UniProtKB-KW"/>
</dbReference>
<dbReference type="GO" id="GO:0035999">
    <property type="term" value="P:tetrahydrofolate interconversion"/>
    <property type="evidence" value="ECO:0007669"/>
    <property type="project" value="UniProtKB-UniRule"/>
</dbReference>
<dbReference type="CDD" id="cd01080">
    <property type="entry name" value="NAD_bind_m-THF_DH_Cyclohyd"/>
    <property type="match status" value="1"/>
</dbReference>
<dbReference type="FunFam" id="3.40.50.720:FF:000094">
    <property type="entry name" value="Bifunctional protein FolD"/>
    <property type="match status" value="1"/>
</dbReference>
<dbReference type="FunFam" id="3.40.50.10860:FF:000005">
    <property type="entry name" value="C-1-tetrahydrofolate synthase, cytoplasmic, putative"/>
    <property type="match status" value="1"/>
</dbReference>
<dbReference type="Gene3D" id="3.40.50.10860">
    <property type="entry name" value="Leucine Dehydrogenase, chain A, domain 1"/>
    <property type="match status" value="1"/>
</dbReference>
<dbReference type="Gene3D" id="3.40.50.720">
    <property type="entry name" value="NAD(P)-binding Rossmann-like Domain"/>
    <property type="match status" value="1"/>
</dbReference>
<dbReference type="HAMAP" id="MF_01576">
    <property type="entry name" value="THF_DHG_CYH"/>
    <property type="match status" value="1"/>
</dbReference>
<dbReference type="InterPro" id="IPR046346">
    <property type="entry name" value="Aminoacid_DH-like_N_sf"/>
</dbReference>
<dbReference type="InterPro" id="IPR036291">
    <property type="entry name" value="NAD(P)-bd_dom_sf"/>
</dbReference>
<dbReference type="InterPro" id="IPR000672">
    <property type="entry name" value="THF_DH/CycHdrlase"/>
</dbReference>
<dbReference type="InterPro" id="IPR020630">
    <property type="entry name" value="THF_DH/CycHdrlase_cat_dom"/>
</dbReference>
<dbReference type="InterPro" id="IPR020631">
    <property type="entry name" value="THF_DH/CycHdrlase_NAD-bd_dom"/>
</dbReference>
<dbReference type="NCBIfam" id="NF010789">
    <property type="entry name" value="PRK14193.1"/>
    <property type="match status" value="1"/>
</dbReference>
<dbReference type="PANTHER" id="PTHR48099:SF5">
    <property type="entry name" value="C-1-TETRAHYDROFOLATE SYNTHASE, CYTOPLASMIC"/>
    <property type="match status" value="1"/>
</dbReference>
<dbReference type="PANTHER" id="PTHR48099">
    <property type="entry name" value="C-1-TETRAHYDROFOLATE SYNTHASE, CYTOPLASMIC-RELATED"/>
    <property type="match status" value="1"/>
</dbReference>
<dbReference type="Pfam" id="PF00763">
    <property type="entry name" value="THF_DHG_CYH"/>
    <property type="match status" value="1"/>
</dbReference>
<dbReference type="Pfam" id="PF02882">
    <property type="entry name" value="THF_DHG_CYH_C"/>
    <property type="match status" value="1"/>
</dbReference>
<dbReference type="PRINTS" id="PR00085">
    <property type="entry name" value="THFDHDRGNASE"/>
</dbReference>
<dbReference type="SUPFAM" id="SSF53223">
    <property type="entry name" value="Aminoacid dehydrogenase-like, N-terminal domain"/>
    <property type="match status" value="1"/>
</dbReference>
<dbReference type="SUPFAM" id="SSF51735">
    <property type="entry name" value="NAD(P)-binding Rossmann-fold domains"/>
    <property type="match status" value="1"/>
</dbReference>
<organism>
    <name type="scientific">Mycobacterium tuberculosis (strain ATCC 25177 / H37Ra)</name>
    <dbReference type="NCBI Taxonomy" id="419947"/>
    <lineage>
        <taxon>Bacteria</taxon>
        <taxon>Bacillati</taxon>
        <taxon>Actinomycetota</taxon>
        <taxon>Actinomycetes</taxon>
        <taxon>Mycobacteriales</taxon>
        <taxon>Mycobacteriaceae</taxon>
        <taxon>Mycobacterium</taxon>
        <taxon>Mycobacterium tuberculosis complex</taxon>
    </lineage>
</organism>
<evidence type="ECO:0000255" key="1">
    <source>
        <dbReference type="HAMAP-Rule" id="MF_01576"/>
    </source>
</evidence>
<name>FOLD_MYCTA</name>
<protein>
    <recommendedName>
        <fullName evidence="1">Bifunctional protein FolD</fullName>
    </recommendedName>
    <domain>
        <recommendedName>
            <fullName evidence="1">Methylenetetrahydrofolate dehydrogenase</fullName>
            <ecNumber evidence="1">1.5.1.5</ecNumber>
        </recommendedName>
    </domain>
    <domain>
        <recommendedName>
            <fullName evidence="1">Methenyltetrahydrofolate cyclohydrolase</fullName>
            <ecNumber evidence="1">3.5.4.9</ecNumber>
        </recommendedName>
    </domain>
</protein>
<reference key="1">
    <citation type="journal article" date="2008" name="PLoS ONE">
        <title>Genetic basis of virulence attenuation revealed by comparative genomic analysis of Mycobacterium tuberculosis strain H37Ra versus H37Rv.</title>
        <authorList>
            <person name="Zheng H."/>
            <person name="Lu L."/>
            <person name="Wang B."/>
            <person name="Pu S."/>
            <person name="Zhang X."/>
            <person name="Zhu G."/>
            <person name="Shi W."/>
            <person name="Zhang L."/>
            <person name="Wang H."/>
            <person name="Wang S."/>
            <person name="Zhao G."/>
            <person name="Zhang Y."/>
        </authorList>
    </citation>
    <scope>NUCLEOTIDE SEQUENCE [LARGE SCALE GENOMIC DNA]</scope>
    <source>
        <strain>ATCC 25177 / H37Ra</strain>
    </source>
</reference>
<keyword id="KW-0028">Amino-acid biosynthesis</keyword>
<keyword id="KW-0368">Histidine biosynthesis</keyword>
<keyword id="KW-0378">Hydrolase</keyword>
<keyword id="KW-0486">Methionine biosynthesis</keyword>
<keyword id="KW-0511">Multifunctional enzyme</keyword>
<keyword id="KW-0521">NADP</keyword>
<keyword id="KW-0554">One-carbon metabolism</keyword>
<keyword id="KW-0560">Oxidoreductase</keyword>
<keyword id="KW-0658">Purine biosynthesis</keyword>
<keyword id="KW-1185">Reference proteome</keyword>